<accession>P63567</accession>
<accession>G0K657</accession>
<accession>Q8YFA1</accession>
<feature type="chain" id="PRO_0000112733" description="Acetylornithine aminotransferase">
    <location>
        <begin position="1"/>
        <end position="403"/>
    </location>
</feature>
<feature type="binding site" evidence="1">
    <location>
        <begin position="101"/>
        <end position="102"/>
    </location>
    <ligand>
        <name>pyridoxal 5'-phosphate</name>
        <dbReference type="ChEBI" id="CHEBI:597326"/>
    </ligand>
</feature>
<feature type="binding site" evidence="1">
    <location>
        <position position="134"/>
    </location>
    <ligand>
        <name>pyridoxal 5'-phosphate</name>
        <dbReference type="ChEBI" id="CHEBI:597326"/>
    </ligand>
</feature>
<feature type="binding site" evidence="1">
    <location>
        <position position="137"/>
    </location>
    <ligand>
        <name>N(2)-acetyl-L-ornithine</name>
        <dbReference type="ChEBI" id="CHEBI:57805"/>
    </ligand>
</feature>
<feature type="binding site" evidence="1">
    <location>
        <begin position="219"/>
        <end position="222"/>
    </location>
    <ligand>
        <name>pyridoxal 5'-phosphate</name>
        <dbReference type="ChEBI" id="CHEBI:597326"/>
    </ligand>
</feature>
<feature type="binding site" evidence="1">
    <location>
        <position position="276"/>
    </location>
    <ligand>
        <name>N(2)-acetyl-L-ornithine</name>
        <dbReference type="ChEBI" id="CHEBI:57805"/>
    </ligand>
</feature>
<feature type="binding site" evidence="1">
    <location>
        <position position="277"/>
    </location>
    <ligand>
        <name>pyridoxal 5'-phosphate</name>
        <dbReference type="ChEBI" id="CHEBI:597326"/>
    </ligand>
</feature>
<feature type="modified residue" description="N6-(pyridoxal phosphate)lysine" evidence="1">
    <location>
        <position position="248"/>
    </location>
</feature>
<dbReference type="EC" id="2.6.1.11" evidence="1"/>
<dbReference type="EMBL" id="AE014291">
    <property type="protein sequence ID" value="AAN29250.1"/>
    <property type="molecule type" value="Genomic_DNA"/>
</dbReference>
<dbReference type="EMBL" id="CP002997">
    <property type="protein sequence ID" value="AEM17663.1"/>
    <property type="molecule type" value="Genomic_DNA"/>
</dbReference>
<dbReference type="RefSeq" id="WP_002963465.1">
    <property type="nucleotide sequence ID" value="NZ_KN046804.1"/>
</dbReference>
<dbReference type="SMR" id="P63567"/>
<dbReference type="KEGG" id="bms:BR0301"/>
<dbReference type="KEGG" id="bsi:BS1330_I0302"/>
<dbReference type="PATRIC" id="fig|204722.21.peg.1788"/>
<dbReference type="HOGENOM" id="CLU_016922_10_1_5"/>
<dbReference type="PhylomeDB" id="P63567"/>
<dbReference type="UniPathway" id="UPA00068">
    <property type="reaction ID" value="UER00109"/>
</dbReference>
<dbReference type="Proteomes" id="UP000007104">
    <property type="component" value="Chromosome I"/>
</dbReference>
<dbReference type="GO" id="GO:0005737">
    <property type="term" value="C:cytoplasm"/>
    <property type="evidence" value="ECO:0007669"/>
    <property type="project" value="UniProtKB-SubCell"/>
</dbReference>
<dbReference type="GO" id="GO:0042802">
    <property type="term" value="F:identical protein binding"/>
    <property type="evidence" value="ECO:0007669"/>
    <property type="project" value="TreeGrafter"/>
</dbReference>
<dbReference type="GO" id="GO:0003992">
    <property type="term" value="F:N2-acetyl-L-ornithine:2-oxoglutarate 5-aminotransferase activity"/>
    <property type="evidence" value="ECO:0007669"/>
    <property type="project" value="UniProtKB-UniRule"/>
</dbReference>
<dbReference type="GO" id="GO:0030170">
    <property type="term" value="F:pyridoxal phosphate binding"/>
    <property type="evidence" value="ECO:0007669"/>
    <property type="project" value="InterPro"/>
</dbReference>
<dbReference type="GO" id="GO:0006526">
    <property type="term" value="P:L-arginine biosynthetic process"/>
    <property type="evidence" value="ECO:0007669"/>
    <property type="project" value="UniProtKB-UniRule"/>
</dbReference>
<dbReference type="CDD" id="cd00610">
    <property type="entry name" value="OAT_like"/>
    <property type="match status" value="1"/>
</dbReference>
<dbReference type="FunFam" id="3.40.640.10:FF:000004">
    <property type="entry name" value="Acetylornithine aminotransferase"/>
    <property type="match status" value="1"/>
</dbReference>
<dbReference type="Gene3D" id="3.90.1150.10">
    <property type="entry name" value="Aspartate Aminotransferase, domain 1"/>
    <property type="match status" value="1"/>
</dbReference>
<dbReference type="Gene3D" id="3.40.640.10">
    <property type="entry name" value="Type I PLP-dependent aspartate aminotransferase-like (Major domain)"/>
    <property type="match status" value="1"/>
</dbReference>
<dbReference type="HAMAP" id="MF_01107">
    <property type="entry name" value="ArgD_aminotrans_3"/>
    <property type="match status" value="1"/>
</dbReference>
<dbReference type="InterPro" id="IPR004636">
    <property type="entry name" value="AcOrn/SuccOrn_fam"/>
</dbReference>
<dbReference type="InterPro" id="IPR005814">
    <property type="entry name" value="Aminotrans_3"/>
</dbReference>
<dbReference type="InterPro" id="IPR049704">
    <property type="entry name" value="Aminotrans_3_PPA_site"/>
</dbReference>
<dbReference type="InterPro" id="IPR050103">
    <property type="entry name" value="Class-III_PLP-dep_AT"/>
</dbReference>
<dbReference type="InterPro" id="IPR015424">
    <property type="entry name" value="PyrdxlP-dep_Trfase"/>
</dbReference>
<dbReference type="InterPro" id="IPR015421">
    <property type="entry name" value="PyrdxlP-dep_Trfase_major"/>
</dbReference>
<dbReference type="InterPro" id="IPR015422">
    <property type="entry name" value="PyrdxlP-dep_Trfase_small"/>
</dbReference>
<dbReference type="NCBIfam" id="TIGR00707">
    <property type="entry name" value="argD"/>
    <property type="match status" value="1"/>
</dbReference>
<dbReference type="NCBIfam" id="NF002325">
    <property type="entry name" value="PRK01278.1"/>
    <property type="match status" value="1"/>
</dbReference>
<dbReference type="PANTHER" id="PTHR11986">
    <property type="entry name" value="AMINOTRANSFERASE CLASS III"/>
    <property type="match status" value="1"/>
</dbReference>
<dbReference type="PANTHER" id="PTHR11986:SF113">
    <property type="entry name" value="SUCCINYLORNITHINE TRANSAMINASE"/>
    <property type="match status" value="1"/>
</dbReference>
<dbReference type="Pfam" id="PF00202">
    <property type="entry name" value="Aminotran_3"/>
    <property type="match status" value="1"/>
</dbReference>
<dbReference type="PIRSF" id="PIRSF000521">
    <property type="entry name" value="Transaminase_4ab_Lys_Orn"/>
    <property type="match status" value="1"/>
</dbReference>
<dbReference type="SUPFAM" id="SSF53383">
    <property type="entry name" value="PLP-dependent transferases"/>
    <property type="match status" value="1"/>
</dbReference>
<dbReference type="PROSITE" id="PS00600">
    <property type="entry name" value="AA_TRANSFER_CLASS_3"/>
    <property type="match status" value="1"/>
</dbReference>
<gene>
    <name evidence="1" type="primary">argD</name>
    <name type="ordered locus">BR0301</name>
    <name type="ordered locus">BS1330_I0302</name>
</gene>
<organism>
    <name type="scientific">Brucella suis biovar 1 (strain 1330)</name>
    <dbReference type="NCBI Taxonomy" id="204722"/>
    <lineage>
        <taxon>Bacteria</taxon>
        <taxon>Pseudomonadati</taxon>
        <taxon>Pseudomonadota</taxon>
        <taxon>Alphaproteobacteria</taxon>
        <taxon>Hyphomicrobiales</taxon>
        <taxon>Brucellaceae</taxon>
        <taxon>Brucella/Ochrobactrum group</taxon>
        <taxon>Brucella</taxon>
    </lineage>
</organism>
<proteinExistence type="inferred from homology"/>
<protein>
    <recommendedName>
        <fullName evidence="1">Acetylornithine aminotransferase</fullName>
        <shortName evidence="1">ACOAT</shortName>
        <ecNumber evidence="1">2.6.1.11</ecNumber>
    </recommendedName>
</protein>
<reference key="1">
    <citation type="journal article" date="2002" name="Proc. Natl. Acad. Sci. U.S.A.">
        <title>The Brucella suis genome reveals fundamental similarities between animal and plant pathogens and symbionts.</title>
        <authorList>
            <person name="Paulsen I.T."/>
            <person name="Seshadri R."/>
            <person name="Nelson K.E."/>
            <person name="Eisen J.A."/>
            <person name="Heidelberg J.F."/>
            <person name="Read T.D."/>
            <person name="Dodson R.J."/>
            <person name="Umayam L.A."/>
            <person name="Brinkac L.M."/>
            <person name="Beanan M.J."/>
            <person name="Daugherty S.C."/>
            <person name="DeBoy R.T."/>
            <person name="Durkin A.S."/>
            <person name="Kolonay J.F."/>
            <person name="Madupu R."/>
            <person name="Nelson W.C."/>
            <person name="Ayodeji B."/>
            <person name="Kraul M."/>
            <person name="Shetty J."/>
            <person name="Malek J.A."/>
            <person name="Van Aken S.E."/>
            <person name="Riedmuller S."/>
            <person name="Tettelin H."/>
            <person name="Gill S.R."/>
            <person name="White O."/>
            <person name="Salzberg S.L."/>
            <person name="Hoover D.L."/>
            <person name="Lindler L.E."/>
            <person name="Halling S.M."/>
            <person name="Boyle S.M."/>
            <person name="Fraser C.M."/>
        </authorList>
    </citation>
    <scope>NUCLEOTIDE SEQUENCE [LARGE SCALE GENOMIC DNA]</scope>
    <source>
        <strain>1330</strain>
    </source>
</reference>
<reference key="2">
    <citation type="journal article" date="2011" name="J. Bacteriol.">
        <title>Revised genome sequence of Brucella suis 1330.</title>
        <authorList>
            <person name="Tae H."/>
            <person name="Shallom S."/>
            <person name="Settlage R."/>
            <person name="Preston D."/>
            <person name="Adams L.G."/>
            <person name="Garner H.R."/>
        </authorList>
    </citation>
    <scope>NUCLEOTIDE SEQUENCE [LARGE SCALE GENOMIC DNA]</scope>
    <source>
        <strain>1330</strain>
    </source>
</reference>
<name>ARGD_BRUSU</name>
<comment type="catalytic activity">
    <reaction evidence="1">
        <text>N(2)-acetyl-L-ornithine + 2-oxoglutarate = N-acetyl-L-glutamate 5-semialdehyde + L-glutamate</text>
        <dbReference type="Rhea" id="RHEA:18049"/>
        <dbReference type="ChEBI" id="CHEBI:16810"/>
        <dbReference type="ChEBI" id="CHEBI:29123"/>
        <dbReference type="ChEBI" id="CHEBI:29985"/>
        <dbReference type="ChEBI" id="CHEBI:57805"/>
        <dbReference type="EC" id="2.6.1.11"/>
    </reaction>
</comment>
<comment type="cofactor">
    <cofactor evidence="1">
        <name>pyridoxal 5'-phosphate</name>
        <dbReference type="ChEBI" id="CHEBI:597326"/>
    </cofactor>
    <text evidence="1">Binds 1 pyridoxal phosphate per subunit.</text>
</comment>
<comment type="pathway">
    <text evidence="1">Amino-acid biosynthesis; L-arginine biosynthesis; N(2)-acetyl-L-ornithine from L-glutamate: step 4/4.</text>
</comment>
<comment type="subunit">
    <text evidence="1">Homodimer.</text>
</comment>
<comment type="subcellular location">
    <subcellularLocation>
        <location evidence="1">Cytoplasm</location>
    </subcellularLocation>
</comment>
<comment type="miscellaneous">
    <text evidence="1">May also have succinyldiaminopimelate aminotransferase activity, thus carrying out the corresponding step in lysine biosynthesis.</text>
</comment>
<comment type="similarity">
    <text evidence="1">Belongs to the class-III pyridoxal-phosphate-dependent aminotransferase family. ArgD subfamily.</text>
</comment>
<sequence length="403" mass="43453">MTDATTVHPLYDTYNRAALRFERGEGIWLITEDGERYIDFAAGIAVNSLGHSHPHLVETLKTQAEKLWHLSNVYEIPAQEKLGRRLVESTFADKVFFTNSGAEALECAIKTARRYQYVSGHPERFRIITFEGAFHGRTLATIAAGGQAKYLEGFGPKVEGFDQVPFGDEAALRAAITPETAGILLEPIQGEGGLRAFPEEFLRLVRQICDENGLLLLLDEVQTGVGRTGKLFAHEWAGIRPDIMAIAKGIGGGFPIGACLATAEAAKGMTAGMHGTTYGGNPLGMAVGNAVLDVVLADGFMENVQATALVMKQGLASLVDRYPNVVSEIRGRGLLMGLKCVVPNTSLIQALRDEHILSVGAGDNVVRLLPPLITTPEEAREALKHIETAVERLSIANPISKTV</sequence>
<evidence type="ECO:0000255" key="1">
    <source>
        <dbReference type="HAMAP-Rule" id="MF_01107"/>
    </source>
</evidence>
<keyword id="KW-0028">Amino-acid biosynthesis</keyword>
<keyword id="KW-0032">Aminotransferase</keyword>
<keyword id="KW-0055">Arginine biosynthesis</keyword>
<keyword id="KW-0963">Cytoplasm</keyword>
<keyword id="KW-0663">Pyridoxal phosphate</keyword>
<keyword id="KW-0808">Transferase</keyword>